<comment type="function">
    <text evidence="1">Together with its co-chaperonin GroES, plays an essential role in assisting protein folding. The GroEL-GroES system forms a nano-cage that allows encapsulation of the non-native substrate proteins and provides a physical environment optimized to promote and accelerate protein folding.</text>
</comment>
<comment type="catalytic activity">
    <reaction evidence="1">
        <text>ATP + H2O + a folded polypeptide = ADP + phosphate + an unfolded polypeptide.</text>
        <dbReference type="EC" id="5.6.1.7"/>
    </reaction>
</comment>
<comment type="subunit">
    <text evidence="1">Forms a cylinder of 14 subunits composed of two heptameric rings stacked back-to-back. Interacts with the co-chaperonin GroES.</text>
</comment>
<comment type="subcellular location">
    <subcellularLocation>
        <location evidence="1">Cytoplasm</location>
    </subcellularLocation>
</comment>
<comment type="similarity">
    <text evidence="1">Belongs to the chaperonin (HSP60) family.</text>
</comment>
<sequence>MAAKHVIYGEEARAKLKAGVDKLANAVKVTLGPKGREVIIEKKWGVPVVTKDGVTVAKEIELKDQFENIGAQLVKEVASKTADVAGDGTTTATVLAQAIFTEGLKAIASGANPMDLKRGIDEAVALVIEEVKKASIPVTSNKEIEQVATISANNDPVIGKLLAEAMEKVGKDGVITVEESKSSETTLETVQGMQFDRGYLSPYFITDADKMQAVLENPYILIFEKKISNIKELLPVLENVVRVGRSLVIIAEDVEAEALATLVVNTLKGVIRAVAVKAPGFGQRRKDYLEDIAILTGGQAITEDLGIKLESVTLDMLGQAEKVIVDKENTTIVGGKGDKKKVEARIEQIKKQIKETTSDYDREKLQERLAKLSGGVAIIRVGAATESELKEKKARVEDAVHATKAAAEEGIVAGGGTALAKASRVLENYTSANKDRELGVKIVYNACKYPLKQIAYNAGYEGSLVLEKVYEDQDKNYGFDAANGEYKDMVKAGIIDPTKVVRTALQNAASAAGTMLTAEALIAELPEKKEKTPTPTDMPPDFD</sequence>
<proteinExistence type="inferred from homology"/>
<protein>
    <recommendedName>
        <fullName evidence="1">Chaperonin GroEL</fullName>
        <ecNumber evidence="1">5.6.1.7</ecNumber>
    </recommendedName>
    <alternativeName>
        <fullName evidence="1">60 kDa chaperonin</fullName>
    </alternativeName>
    <alternativeName>
        <fullName evidence="1">Chaperonin-60</fullName>
        <shortName evidence="1">Cpn60</shortName>
    </alternativeName>
</protein>
<evidence type="ECO:0000255" key="1">
    <source>
        <dbReference type="HAMAP-Rule" id="MF_00600"/>
    </source>
</evidence>
<dbReference type="EC" id="5.6.1.7" evidence="1"/>
<dbReference type="EMBL" id="CP001130">
    <property type="protein sequence ID" value="ACG57547.1"/>
    <property type="molecule type" value="Genomic_DNA"/>
</dbReference>
<dbReference type="RefSeq" id="WP_012513903.1">
    <property type="nucleotide sequence ID" value="NC_011126.1"/>
</dbReference>
<dbReference type="SMR" id="B4U8T6"/>
<dbReference type="STRING" id="380749.HY04AAS1_0860"/>
<dbReference type="KEGG" id="hya:HY04AAS1_0860"/>
<dbReference type="eggNOG" id="COG0459">
    <property type="taxonomic scope" value="Bacteria"/>
</dbReference>
<dbReference type="HOGENOM" id="CLU_016503_3_0_0"/>
<dbReference type="OrthoDB" id="9766614at2"/>
<dbReference type="GO" id="GO:0005737">
    <property type="term" value="C:cytoplasm"/>
    <property type="evidence" value="ECO:0007669"/>
    <property type="project" value="UniProtKB-SubCell"/>
</dbReference>
<dbReference type="GO" id="GO:0005524">
    <property type="term" value="F:ATP binding"/>
    <property type="evidence" value="ECO:0007669"/>
    <property type="project" value="UniProtKB-UniRule"/>
</dbReference>
<dbReference type="GO" id="GO:0140662">
    <property type="term" value="F:ATP-dependent protein folding chaperone"/>
    <property type="evidence" value="ECO:0007669"/>
    <property type="project" value="InterPro"/>
</dbReference>
<dbReference type="GO" id="GO:0016853">
    <property type="term" value="F:isomerase activity"/>
    <property type="evidence" value="ECO:0007669"/>
    <property type="project" value="UniProtKB-KW"/>
</dbReference>
<dbReference type="GO" id="GO:0051082">
    <property type="term" value="F:unfolded protein binding"/>
    <property type="evidence" value="ECO:0007669"/>
    <property type="project" value="UniProtKB-UniRule"/>
</dbReference>
<dbReference type="GO" id="GO:0042026">
    <property type="term" value="P:protein refolding"/>
    <property type="evidence" value="ECO:0007669"/>
    <property type="project" value="UniProtKB-UniRule"/>
</dbReference>
<dbReference type="CDD" id="cd03344">
    <property type="entry name" value="GroEL"/>
    <property type="match status" value="1"/>
</dbReference>
<dbReference type="FunFam" id="3.50.7.10:FF:000001">
    <property type="entry name" value="60 kDa chaperonin"/>
    <property type="match status" value="1"/>
</dbReference>
<dbReference type="Gene3D" id="3.50.7.10">
    <property type="entry name" value="GroEL"/>
    <property type="match status" value="1"/>
</dbReference>
<dbReference type="Gene3D" id="1.10.560.10">
    <property type="entry name" value="GroEL-like equatorial domain"/>
    <property type="match status" value="1"/>
</dbReference>
<dbReference type="Gene3D" id="3.30.260.10">
    <property type="entry name" value="TCP-1-like chaperonin intermediate domain"/>
    <property type="match status" value="1"/>
</dbReference>
<dbReference type="HAMAP" id="MF_00600">
    <property type="entry name" value="CH60"/>
    <property type="match status" value="1"/>
</dbReference>
<dbReference type="InterPro" id="IPR018370">
    <property type="entry name" value="Chaperonin_Cpn60_CS"/>
</dbReference>
<dbReference type="InterPro" id="IPR001844">
    <property type="entry name" value="Cpn60/GroEL"/>
</dbReference>
<dbReference type="InterPro" id="IPR002423">
    <property type="entry name" value="Cpn60/GroEL/TCP-1"/>
</dbReference>
<dbReference type="InterPro" id="IPR027409">
    <property type="entry name" value="GroEL-like_apical_dom_sf"/>
</dbReference>
<dbReference type="InterPro" id="IPR027413">
    <property type="entry name" value="GROEL-like_equatorial_sf"/>
</dbReference>
<dbReference type="InterPro" id="IPR027410">
    <property type="entry name" value="TCP-1-like_intermed_sf"/>
</dbReference>
<dbReference type="NCBIfam" id="TIGR02348">
    <property type="entry name" value="GroEL"/>
    <property type="match status" value="1"/>
</dbReference>
<dbReference type="NCBIfam" id="NF000592">
    <property type="entry name" value="PRK00013.1"/>
    <property type="match status" value="1"/>
</dbReference>
<dbReference type="NCBIfam" id="NF009487">
    <property type="entry name" value="PRK12849.1"/>
    <property type="match status" value="1"/>
</dbReference>
<dbReference type="NCBIfam" id="NF009488">
    <property type="entry name" value="PRK12850.1"/>
    <property type="match status" value="1"/>
</dbReference>
<dbReference type="NCBIfam" id="NF009489">
    <property type="entry name" value="PRK12851.1"/>
    <property type="match status" value="1"/>
</dbReference>
<dbReference type="PANTHER" id="PTHR45633">
    <property type="entry name" value="60 KDA HEAT SHOCK PROTEIN, MITOCHONDRIAL"/>
    <property type="match status" value="1"/>
</dbReference>
<dbReference type="Pfam" id="PF00118">
    <property type="entry name" value="Cpn60_TCP1"/>
    <property type="match status" value="1"/>
</dbReference>
<dbReference type="PRINTS" id="PR00298">
    <property type="entry name" value="CHAPERONIN60"/>
</dbReference>
<dbReference type="SUPFAM" id="SSF52029">
    <property type="entry name" value="GroEL apical domain-like"/>
    <property type="match status" value="1"/>
</dbReference>
<dbReference type="SUPFAM" id="SSF48592">
    <property type="entry name" value="GroEL equatorial domain-like"/>
    <property type="match status" value="1"/>
</dbReference>
<dbReference type="SUPFAM" id="SSF54849">
    <property type="entry name" value="GroEL-intermediate domain like"/>
    <property type="match status" value="1"/>
</dbReference>
<dbReference type="PROSITE" id="PS00296">
    <property type="entry name" value="CHAPERONINS_CPN60"/>
    <property type="match status" value="1"/>
</dbReference>
<reference key="1">
    <citation type="journal article" date="2009" name="J. Bacteriol.">
        <title>Complete and draft genome sequences of six members of the Aquificales.</title>
        <authorList>
            <person name="Reysenbach A.-L."/>
            <person name="Hamamura N."/>
            <person name="Podar M."/>
            <person name="Griffiths E."/>
            <person name="Ferreira S."/>
            <person name="Hochstein R."/>
            <person name="Heidelberg J."/>
            <person name="Johnson J."/>
            <person name="Mead D."/>
            <person name="Pohorille A."/>
            <person name="Sarmiento M."/>
            <person name="Schweighofer K."/>
            <person name="Seshadri R."/>
            <person name="Voytek M.A."/>
        </authorList>
    </citation>
    <scope>NUCLEOTIDE SEQUENCE [LARGE SCALE GENOMIC DNA]</scope>
    <source>
        <strain>Y04AAS1</strain>
    </source>
</reference>
<feature type="chain" id="PRO_1000130027" description="Chaperonin GroEL">
    <location>
        <begin position="1"/>
        <end position="543"/>
    </location>
</feature>
<feature type="binding site" evidence="1">
    <location>
        <begin position="30"/>
        <end position="33"/>
    </location>
    <ligand>
        <name>ATP</name>
        <dbReference type="ChEBI" id="CHEBI:30616"/>
    </ligand>
</feature>
<feature type="binding site" evidence="1">
    <location>
        <position position="51"/>
    </location>
    <ligand>
        <name>ATP</name>
        <dbReference type="ChEBI" id="CHEBI:30616"/>
    </ligand>
</feature>
<feature type="binding site" evidence="1">
    <location>
        <begin position="87"/>
        <end position="91"/>
    </location>
    <ligand>
        <name>ATP</name>
        <dbReference type="ChEBI" id="CHEBI:30616"/>
    </ligand>
</feature>
<feature type="binding site" evidence="1">
    <location>
        <position position="415"/>
    </location>
    <ligand>
        <name>ATP</name>
        <dbReference type="ChEBI" id="CHEBI:30616"/>
    </ligand>
</feature>
<feature type="binding site" evidence="1">
    <location>
        <begin position="480"/>
        <end position="482"/>
    </location>
    <ligand>
        <name>ATP</name>
        <dbReference type="ChEBI" id="CHEBI:30616"/>
    </ligand>
</feature>
<feature type="binding site" evidence="1">
    <location>
        <position position="496"/>
    </location>
    <ligand>
        <name>ATP</name>
        <dbReference type="ChEBI" id="CHEBI:30616"/>
    </ligand>
</feature>
<gene>
    <name evidence="1" type="primary">groEL</name>
    <name evidence="1" type="synonym">groL</name>
    <name type="ordered locus">HY04AAS1_0860</name>
</gene>
<keyword id="KW-0067">ATP-binding</keyword>
<keyword id="KW-0143">Chaperone</keyword>
<keyword id="KW-0963">Cytoplasm</keyword>
<keyword id="KW-0413">Isomerase</keyword>
<keyword id="KW-0547">Nucleotide-binding</keyword>
<name>CH60_HYDS0</name>
<accession>B4U8T6</accession>
<organism>
    <name type="scientific">Hydrogenobaculum sp. (strain Y04AAS1)</name>
    <dbReference type="NCBI Taxonomy" id="380749"/>
    <lineage>
        <taxon>Bacteria</taxon>
        <taxon>Pseudomonadati</taxon>
        <taxon>Aquificota</taxon>
        <taxon>Aquificia</taxon>
        <taxon>Aquificales</taxon>
        <taxon>Aquificaceae</taxon>
        <taxon>Hydrogenobaculum</taxon>
    </lineage>
</organism>